<dbReference type="EMBL" id="U87789">
    <property type="protein sequence ID" value="AAB88911.1"/>
    <property type="molecule type" value="Genomic_DNA"/>
</dbReference>
<dbReference type="Ensembl" id="ENSPCIT00000007277">
    <property type="protein sequence ID" value="ENSPCIP00000005770"/>
    <property type="gene ID" value="ENSPCIG00000004831"/>
</dbReference>
<dbReference type="InParanoid" id="P79990"/>
<dbReference type="Proteomes" id="UP000515140">
    <property type="component" value="Unplaced"/>
</dbReference>
<dbReference type="GO" id="GO:0000786">
    <property type="term" value="C:nucleosome"/>
    <property type="evidence" value="ECO:0007669"/>
    <property type="project" value="UniProtKB-KW"/>
</dbReference>
<dbReference type="GO" id="GO:0005634">
    <property type="term" value="C:nucleus"/>
    <property type="evidence" value="ECO:0007669"/>
    <property type="project" value="UniProtKB-SubCell"/>
</dbReference>
<dbReference type="GO" id="GO:0003677">
    <property type="term" value="F:DNA binding"/>
    <property type="evidence" value="ECO:0007669"/>
    <property type="project" value="UniProtKB-KW"/>
</dbReference>
<dbReference type="GO" id="GO:0030261">
    <property type="term" value="P:chromosome condensation"/>
    <property type="evidence" value="ECO:0007669"/>
    <property type="project" value="UniProtKB-KW"/>
</dbReference>
<dbReference type="GO" id="GO:0035092">
    <property type="term" value="P:sperm DNA condensation"/>
    <property type="evidence" value="ECO:0007669"/>
    <property type="project" value="InterPro"/>
</dbReference>
<dbReference type="InterPro" id="IPR000221">
    <property type="entry name" value="Protamine_P1"/>
</dbReference>
<dbReference type="PROSITE" id="PS00048">
    <property type="entry name" value="PROTAMINE_P1"/>
    <property type="match status" value="1"/>
</dbReference>
<feature type="chain" id="PRO_0000191527" description="Sperm protamine P1">
    <location>
        <begin position="1"/>
        <end position="60"/>
    </location>
</feature>
<feature type="region of interest" description="Disordered" evidence="1">
    <location>
        <begin position="1"/>
        <end position="60"/>
    </location>
</feature>
<reference key="1">
    <citation type="submission" date="1997-01" db="EMBL/GenBank/DDBJ databases">
        <authorList>
            <person name="Retief J.D."/>
            <person name="Krajewski C."/>
            <person name="Westerman M."/>
            <person name="Winkfein R.J."/>
            <person name="Dixon G.H."/>
        </authorList>
    </citation>
    <scope>NUCLEOTIDE SEQUENCE [GENOMIC DNA]</scope>
</reference>
<comment type="function">
    <text>Protamines substitute for histones in the chromatin of sperm during the haploid phase of spermatogenesis. They compact sperm DNA into a highly condensed, stable and inactive complex.</text>
</comment>
<comment type="subcellular location">
    <subcellularLocation>
        <location>Nucleus</location>
    </subcellularLocation>
    <subcellularLocation>
        <location>Chromosome</location>
    </subcellularLocation>
</comment>
<comment type="tissue specificity">
    <text>Testis.</text>
</comment>
<comment type="similarity">
    <text evidence="2">Belongs to the protamine P1 family.</text>
</comment>
<sequence>MARYRHSRSRSRSRYQRRRRRRSRYRSQRRRYRRRRGSRRRRRRGRRRGYRRRYSRRRRY</sequence>
<gene>
    <name type="primary">PRM1</name>
</gene>
<evidence type="ECO:0000256" key="1">
    <source>
        <dbReference type="SAM" id="MobiDB-lite"/>
    </source>
</evidence>
<evidence type="ECO:0000305" key="2"/>
<proteinExistence type="evidence at transcript level"/>
<accession>P79990</accession>
<organism>
    <name type="scientific">Phascolarctos cinereus</name>
    <name type="common">Koala</name>
    <dbReference type="NCBI Taxonomy" id="38626"/>
    <lineage>
        <taxon>Eukaryota</taxon>
        <taxon>Metazoa</taxon>
        <taxon>Chordata</taxon>
        <taxon>Craniata</taxon>
        <taxon>Vertebrata</taxon>
        <taxon>Euteleostomi</taxon>
        <taxon>Mammalia</taxon>
        <taxon>Metatheria</taxon>
        <taxon>Diprotodontia</taxon>
        <taxon>Phascolarctidae</taxon>
        <taxon>Phascolarctos</taxon>
    </lineage>
</organism>
<protein>
    <recommendedName>
        <fullName>Sperm protamine P1</fullName>
    </recommendedName>
</protein>
<name>HSP1_PHACI</name>
<keyword id="KW-0158">Chromosome</keyword>
<keyword id="KW-0217">Developmental protein</keyword>
<keyword id="KW-0221">Differentiation</keyword>
<keyword id="KW-0226">DNA condensation</keyword>
<keyword id="KW-0238">DNA-binding</keyword>
<keyword id="KW-0544">Nucleosome core</keyword>
<keyword id="KW-0539">Nucleus</keyword>
<keyword id="KW-1185">Reference proteome</keyword>
<keyword id="KW-0744">Spermatogenesis</keyword>